<reference key="1">
    <citation type="submission" date="2003-03" db="EMBL/GenBank/DDBJ databases">
        <authorList>
            <consortium name="NIH - Zebrafish Gene Collection (ZGC) project"/>
        </authorList>
    </citation>
    <scope>NUCLEOTIDE SEQUENCE [LARGE SCALE MRNA]</scope>
    <source>
        <tissue>Embryo</tissue>
    </source>
</reference>
<organism>
    <name type="scientific">Danio rerio</name>
    <name type="common">Zebrafish</name>
    <name type="synonym">Brachydanio rerio</name>
    <dbReference type="NCBI Taxonomy" id="7955"/>
    <lineage>
        <taxon>Eukaryota</taxon>
        <taxon>Metazoa</taxon>
        <taxon>Chordata</taxon>
        <taxon>Craniata</taxon>
        <taxon>Vertebrata</taxon>
        <taxon>Euteleostomi</taxon>
        <taxon>Actinopterygii</taxon>
        <taxon>Neopterygii</taxon>
        <taxon>Teleostei</taxon>
        <taxon>Ostariophysi</taxon>
        <taxon>Cypriniformes</taxon>
        <taxon>Danionidae</taxon>
        <taxon>Danioninae</taxon>
        <taxon>Danio</taxon>
    </lineage>
</organism>
<gene>
    <name type="primary">bbs5</name>
    <name type="ORF">zgc:56578</name>
</gene>
<keyword id="KW-1003">Cell membrane</keyword>
<keyword id="KW-0966">Cell projection</keyword>
<keyword id="KW-0969">Cilium</keyword>
<keyword id="KW-0963">Cytoplasm</keyword>
<keyword id="KW-0206">Cytoskeleton</keyword>
<keyword id="KW-0472">Membrane</keyword>
<keyword id="KW-1185">Reference proteome</keyword>
<sequence>MASVLDALWEDRDVRFDITAQQMKTRPGEALIDCLDSIEDTKGNNGDRGRLLVTNLRIIWHSLALPRVNLSVGYNCIINITTRTANSKLRGQTEALYILTKSNNTRFEFIFTNVVPGSPRLFTSVIAVHRAYETSKMYRDLKLRGALIQNKQLRLLPQEQVYDKINGVWNLSSDQGNLGTFFITNVRIVWHANMNESFNVSIPYLQIRSIRIRDSKFGLALVIESSQQTGGYVLGFKIDPMDKLQDAVKEINSLHKVYSANPIFGVEYEMEEKPQPLEELTVEQPPDDVEIEPDEHTDAFTAYFADGNKQHDREPVFSEELGLAIEKLKDGFTLQGLWEVMG</sequence>
<accession>Q7ZWB7</accession>
<protein>
    <recommendedName>
        <fullName evidence="3">BBSome complex member BBS5</fullName>
    </recommendedName>
    <alternativeName>
        <fullName>Bardet-Biedl syndrome 5 protein homolog</fullName>
    </alternativeName>
</protein>
<dbReference type="EMBL" id="BC049492">
    <property type="protein sequence ID" value="AAH49492.1"/>
    <property type="molecule type" value="mRNA"/>
</dbReference>
<dbReference type="RefSeq" id="NP_956593.1">
    <property type="nucleotide sequence ID" value="NM_200299.2"/>
</dbReference>
<dbReference type="SMR" id="Q7ZWB7"/>
<dbReference type="BioGRID" id="89422">
    <property type="interactions" value="1"/>
</dbReference>
<dbReference type="FunCoup" id="Q7ZWB7">
    <property type="interactions" value="273"/>
</dbReference>
<dbReference type="STRING" id="7955.ENSDARP00000058254"/>
<dbReference type="PaxDb" id="7955-ENSDARP00000058254"/>
<dbReference type="Ensembl" id="ENSDART00000058255">
    <property type="protein sequence ID" value="ENSDARP00000058254"/>
    <property type="gene ID" value="ENSDARG00000039827"/>
</dbReference>
<dbReference type="GeneID" id="393269"/>
<dbReference type="KEGG" id="dre:393269"/>
<dbReference type="AGR" id="ZFIN:ZDB-GENE-040426-1083"/>
<dbReference type="CTD" id="129880"/>
<dbReference type="ZFIN" id="ZDB-GENE-040426-1083">
    <property type="gene designation" value="bbs5"/>
</dbReference>
<dbReference type="eggNOG" id="ENOG502QR2Z">
    <property type="taxonomic scope" value="Eukaryota"/>
</dbReference>
<dbReference type="HOGENOM" id="CLU_052113_0_0_1"/>
<dbReference type="InParanoid" id="Q7ZWB7"/>
<dbReference type="OMA" id="PNFGIQY"/>
<dbReference type="OrthoDB" id="10261999at2759"/>
<dbReference type="PhylomeDB" id="Q7ZWB7"/>
<dbReference type="TreeFam" id="TF106129"/>
<dbReference type="PRO" id="PR:Q7ZWB7"/>
<dbReference type="Proteomes" id="UP000000437">
    <property type="component" value="Chromosome 9"/>
</dbReference>
<dbReference type="Bgee" id="ENSDARG00000039827">
    <property type="expression patterns" value="Expressed in retina and 31 other cell types or tissues"/>
</dbReference>
<dbReference type="GO" id="GO:0034464">
    <property type="term" value="C:BBSome"/>
    <property type="evidence" value="ECO:0000318"/>
    <property type="project" value="GO_Central"/>
</dbReference>
<dbReference type="GO" id="GO:0034451">
    <property type="term" value="C:centriolar satellite"/>
    <property type="evidence" value="ECO:0007669"/>
    <property type="project" value="UniProtKB-SubCell"/>
</dbReference>
<dbReference type="GO" id="GO:0036064">
    <property type="term" value="C:ciliary basal body"/>
    <property type="evidence" value="ECO:0000318"/>
    <property type="project" value="GO_Central"/>
</dbReference>
<dbReference type="GO" id="GO:0060170">
    <property type="term" value="C:ciliary membrane"/>
    <property type="evidence" value="ECO:0007669"/>
    <property type="project" value="UniProtKB-SubCell"/>
</dbReference>
<dbReference type="GO" id="GO:0005737">
    <property type="term" value="C:cytoplasm"/>
    <property type="evidence" value="ECO:0007669"/>
    <property type="project" value="UniProtKB-KW"/>
</dbReference>
<dbReference type="GO" id="GO:0032266">
    <property type="term" value="F:phosphatidylinositol-3-phosphate binding"/>
    <property type="evidence" value="ECO:0000318"/>
    <property type="project" value="GO_Central"/>
</dbReference>
<dbReference type="GO" id="GO:0043010">
    <property type="term" value="P:camera-type eye development"/>
    <property type="evidence" value="ECO:0000315"/>
    <property type="project" value="ZFIN"/>
</dbReference>
<dbReference type="GO" id="GO:0062139">
    <property type="term" value="P:camera-type eye photoreceptor cell development"/>
    <property type="evidence" value="ECO:0000315"/>
    <property type="project" value="ZFIN"/>
</dbReference>
<dbReference type="GO" id="GO:0060271">
    <property type="term" value="P:cilium assembly"/>
    <property type="evidence" value="ECO:0000318"/>
    <property type="project" value="GO_Central"/>
</dbReference>
<dbReference type="GO" id="GO:0007369">
    <property type="term" value="P:gastrulation"/>
    <property type="evidence" value="ECO:0000315"/>
    <property type="project" value="ZFIN"/>
</dbReference>
<dbReference type="GO" id="GO:0001947">
    <property type="term" value="P:heart looping"/>
    <property type="evidence" value="ECO:0000315"/>
    <property type="project" value="BHF-UCL"/>
</dbReference>
<dbReference type="GO" id="GO:0046907">
    <property type="term" value="P:intracellular transport"/>
    <property type="evidence" value="ECO:0000315"/>
    <property type="project" value="ZFIN"/>
</dbReference>
<dbReference type="GO" id="GO:0070121">
    <property type="term" value="P:Kupffer's vesicle development"/>
    <property type="evidence" value="ECO:0000315"/>
    <property type="project" value="ZFIN"/>
</dbReference>
<dbReference type="GO" id="GO:0032402">
    <property type="term" value="P:melanosome transport"/>
    <property type="evidence" value="ECO:0000315"/>
    <property type="project" value="BHF-UCL"/>
</dbReference>
<dbReference type="GO" id="GO:0051877">
    <property type="term" value="P:pigment granule aggregation in cell center"/>
    <property type="evidence" value="ECO:0000315"/>
    <property type="project" value="ZFIN"/>
</dbReference>
<dbReference type="GO" id="GO:0072116">
    <property type="term" value="P:pronephros formation"/>
    <property type="evidence" value="ECO:0000315"/>
    <property type="project" value="ZFIN"/>
</dbReference>
<dbReference type="FunFam" id="2.30.29.30:FF:000232">
    <property type="entry name" value="Bardet-Biedl syndrome 5 isoform 1"/>
    <property type="match status" value="1"/>
</dbReference>
<dbReference type="Gene3D" id="2.30.29.30">
    <property type="entry name" value="Pleckstrin-homology domain (PH domain)/Phosphotyrosine-binding domain (PTB)"/>
    <property type="match status" value="1"/>
</dbReference>
<dbReference type="InterPro" id="IPR006606">
    <property type="entry name" value="BBL5"/>
</dbReference>
<dbReference type="InterPro" id="IPR030804">
    <property type="entry name" value="BBS5/fem-3"/>
</dbReference>
<dbReference type="InterPro" id="IPR014003">
    <property type="entry name" value="BBS5_PH"/>
</dbReference>
<dbReference type="InterPro" id="IPR011993">
    <property type="entry name" value="PH-like_dom_sf"/>
</dbReference>
<dbReference type="PANTHER" id="PTHR21351:SF0">
    <property type="entry name" value="BARDET-BIEDL SYNDROME 5 PROTEIN"/>
    <property type="match status" value="1"/>
</dbReference>
<dbReference type="PANTHER" id="PTHR21351">
    <property type="entry name" value="BARDET-BIEDL SYNDROME PROTEIN 5"/>
    <property type="match status" value="1"/>
</dbReference>
<dbReference type="Pfam" id="PF07289">
    <property type="entry name" value="BBL5"/>
    <property type="match status" value="1"/>
</dbReference>
<dbReference type="PIRSF" id="PIRSF010072">
    <property type="entry name" value="DUF1448"/>
    <property type="match status" value="1"/>
</dbReference>
<dbReference type="SMART" id="SM00683">
    <property type="entry name" value="DM16"/>
    <property type="match status" value="2"/>
</dbReference>
<name>BBS5_DANRE</name>
<comment type="function">
    <text evidence="1">Required for ciliogenesis.</text>
</comment>
<comment type="subunit">
    <text evidence="2">Part of BBSome complex.</text>
</comment>
<comment type="subcellular location">
    <subcellularLocation>
        <location evidence="1">Cell projection</location>
        <location evidence="1">Cilium membrane</location>
    </subcellularLocation>
    <subcellularLocation>
        <location evidence="1">Cytoplasm</location>
        <location evidence="1">Cytoskeleton</location>
        <location evidence="1">Microtubule organizing center</location>
        <location evidence="1">Centrosome</location>
        <location evidence="1">Centriolar satellite</location>
    </subcellularLocation>
</comment>
<comment type="similarity">
    <text evidence="3">Belongs to the BBS5 family.</text>
</comment>
<proteinExistence type="evidence at transcript level"/>
<evidence type="ECO:0000250" key="1"/>
<evidence type="ECO:0000250" key="2">
    <source>
        <dbReference type="UniProtKB" id="Q8N3I7"/>
    </source>
</evidence>
<evidence type="ECO:0000305" key="3"/>
<feature type="chain" id="PRO_0000223257" description="BBSome complex member BBS5">
    <location>
        <begin position="1"/>
        <end position="342"/>
    </location>
</feature>